<reference key="1">
    <citation type="submission" date="2007-10" db="EMBL/GenBank/DDBJ databases">
        <title>Complete sequence of Methanococcus maripaludis C6.</title>
        <authorList>
            <consortium name="US DOE Joint Genome Institute"/>
            <person name="Copeland A."/>
            <person name="Lucas S."/>
            <person name="Lapidus A."/>
            <person name="Barry K."/>
            <person name="Glavina del Rio T."/>
            <person name="Dalin E."/>
            <person name="Tice H."/>
            <person name="Pitluck S."/>
            <person name="Clum A."/>
            <person name="Schmutz J."/>
            <person name="Larimer F."/>
            <person name="Land M."/>
            <person name="Hauser L."/>
            <person name="Kyrpides N."/>
            <person name="Mikhailova N."/>
            <person name="Sieprawska-Lupa M."/>
            <person name="Whitman W.B."/>
            <person name="Richardson P."/>
        </authorList>
    </citation>
    <scope>NUCLEOTIDE SEQUENCE [LARGE SCALE GENOMIC DNA]</scope>
    <source>
        <strain>C6 / ATCC BAA-1332</strain>
    </source>
</reference>
<sequence>MLVIPAVDMKNKKCVQLIQGNPDKKHVELDNPPEIAKKWVNEGAEMLHLVDLDGALDGKRVNDEFIEEIIKTSGVPVQIGGGIRSIEDAVYLVEKGAKKVIIGTVAVENPEIIKELSEKIGSEKIMVSLDAKNGKVVIKGWKEKTKYTPVEIGKILEEMGAGSILFTNVDSEGLLNGINIEPTKELVDNLKIPIVASGGVTTIDDLLKFKEIGVYGVVVGSAIYKNLINLKDAIEAVK</sequence>
<organism>
    <name type="scientific">Methanococcus maripaludis (strain C6 / ATCC BAA-1332)</name>
    <dbReference type="NCBI Taxonomy" id="444158"/>
    <lineage>
        <taxon>Archaea</taxon>
        <taxon>Methanobacteriati</taxon>
        <taxon>Methanobacteriota</taxon>
        <taxon>Methanomada group</taxon>
        <taxon>Methanococci</taxon>
        <taxon>Methanococcales</taxon>
        <taxon>Methanococcaceae</taxon>
        <taxon>Methanococcus</taxon>
    </lineage>
</organism>
<comment type="catalytic activity">
    <reaction evidence="1">
        <text>1-(5-phospho-beta-D-ribosyl)-5-[(5-phospho-beta-D-ribosylamino)methylideneamino]imidazole-4-carboxamide = 5-[(5-phospho-1-deoxy-D-ribulos-1-ylimino)methylamino]-1-(5-phospho-beta-D-ribosyl)imidazole-4-carboxamide</text>
        <dbReference type="Rhea" id="RHEA:15469"/>
        <dbReference type="ChEBI" id="CHEBI:58435"/>
        <dbReference type="ChEBI" id="CHEBI:58525"/>
        <dbReference type="EC" id="5.3.1.16"/>
    </reaction>
</comment>
<comment type="pathway">
    <text evidence="1">Amino-acid biosynthesis; L-histidine biosynthesis; L-histidine from 5-phospho-alpha-D-ribose 1-diphosphate: step 4/9.</text>
</comment>
<comment type="subcellular location">
    <subcellularLocation>
        <location evidence="1">Cytoplasm</location>
    </subcellularLocation>
</comment>
<comment type="similarity">
    <text evidence="1">Belongs to the HisA/HisF family.</text>
</comment>
<gene>
    <name evidence="1" type="primary">hisA</name>
    <name type="ordered locus">MmarC6_0493</name>
</gene>
<protein>
    <recommendedName>
        <fullName evidence="1">1-(5-phosphoribosyl)-5-[(5-phosphoribosylamino)methylideneamino] imidazole-4-carboxamide isomerase</fullName>
        <ecNumber evidence="1">5.3.1.16</ecNumber>
    </recommendedName>
    <alternativeName>
        <fullName evidence="1">Phosphoribosylformimino-5-aminoimidazole carboxamide ribotide isomerase</fullName>
    </alternativeName>
</protein>
<keyword id="KW-0028">Amino-acid biosynthesis</keyword>
<keyword id="KW-0963">Cytoplasm</keyword>
<keyword id="KW-0368">Histidine biosynthesis</keyword>
<keyword id="KW-0413">Isomerase</keyword>
<name>HIS4_METM6</name>
<proteinExistence type="inferred from homology"/>
<accession>A9A6L5</accession>
<evidence type="ECO:0000255" key="1">
    <source>
        <dbReference type="HAMAP-Rule" id="MF_01014"/>
    </source>
</evidence>
<dbReference type="EC" id="5.3.1.16" evidence="1"/>
<dbReference type="EMBL" id="CP000867">
    <property type="protein sequence ID" value="ABX01311.1"/>
    <property type="molecule type" value="Genomic_DNA"/>
</dbReference>
<dbReference type="SMR" id="A9A6L5"/>
<dbReference type="STRING" id="444158.MmarC6_0493"/>
<dbReference type="KEGG" id="mmx:MmarC6_0493"/>
<dbReference type="eggNOG" id="arCOG00618">
    <property type="taxonomic scope" value="Archaea"/>
</dbReference>
<dbReference type="HOGENOM" id="CLU_048577_1_1_2"/>
<dbReference type="OrthoDB" id="52866at2157"/>
<dbReference type="PhylomeDB" id="A9A6L5"/>
<dbReference type="UniPathway" id="UPA00031">
    <property type="reaction ID" value="UER00009"/>
</dbReference>
<dbReference type="GO" id="GO:0005737">
    <property type="term" value="C:cytoplasm"/>
    <property type="evidence" value="ECO:0007669"/>
    <property type="project" value="UniProtKB-SubCell"/>
</dbReference>
<dbReference type="GO" id="GO:0003949">
    <property type="term" value="F:1-(5-phosphoribosyl)-5-[(5-phosphoribosylamino)methylideneamino]imidazole-4-carboxamide isomerase activity"/>
    <property type="evidence" value="ECO:0007669"/>
    <property type="project" value="UniProtKB-UniRule"/>
</dbReference>
<dbReference type="GO" id="GO:0000105">
    <property type="term" value="P:L-histidine biosynthetic process"/>
    <property type="evidence" value="ECO:0007669"/>
    <property type="project" value="UniProtKB-UniRule"/>
</dbReference>
<dbReference type="GO" id="GO:0000162">
    <property type="term" value="P:L-tryptophan biosynthetic process"/>
    <property type="evidence" value="ECO:0007669"/>
    <property type="project" value="TreeGrafter"/>
</dbReference>
<dbReference type="CDD" id="cd04732">
    <property type="entry name" value="HisA"/>
    <property type="match status" value="1"/>
</dbReference>
<dbReference type="FunFam" id="3.20.20.70:FF:000009">
    <property type="entry name" value="1-(5-phosphoribosyl)-5-[(5-phosphoribosylamino)methylideneamino] imidazole-4-carboxamide isomerase"/>
    <property type="match status" value="1"/>
</dbReference>
<dbReference type="Gene3D" id="3.20.20.70">
    <property type="entry name" value="Aldolase class I"/>
    <property type="match status" value="1"/>
</dbReference>
<dbReference type="HAMAP" id="MF_01014">
    <property type="entry name" value="HisA"/>
    <property type="match status" value="1"/>
</dbReference>
<dbReference type="InterPro" id="IPR013785">
    <property type="entry name" value="Aldolase_TIM"/>
</dbReference>
<dbReference type="InterPro" id="IPR006062">
    <property type="entry name" value="His_biosynth"/>
</dbReference>
<dbReference type="InterPro" id="IPR006063">
    <property type="entry name" value="HisA_bact_arch"/>
</dbReference>
<dbReference type="InterPro" id="IPR044524">
    <property type="entry name" value="Isoase_HisA-like"/>
</dbReference>
<dbReference type="InterPro" id="IPR023016">
    <property type="entry name" value="Isoase_HisA-like_bact"/>
</dbReference>
<dbReference type="InterPro" id="IPR011060">
    <property type="entry name" value="RibuloseP-bd_barrel"/>
</dbReference>
<dbReference type="NCBIfam" id="TIGR00007">
    <property type="entry name" value="1-(5-phosphoribosyl)-5-[(5-phosphoribosylamino)methylideneamino]imidazole-4-carboxamide isomerase"/>
    <property type="match status" value="1"/>
</dbReference>
<dbReference type="NCBIfam" id="NF010112">
    <property type="entry name" value="PRK13585.1"/>
    <property type="match status" value="1"/>
</dbReference>
<dbReference type="PANTHER" id="PTHR43090">
    <property type="entry name" value="1-(5-PHOSPHORIBOSYL)-5-[(5-PHOSPHORIBOSYLAMINO)METHYLIDENEAMINO] IMIDAZOLE-4-CARBOXAMIDE ISOMERASE"/>
    <property type="match status" value="1"/>
</dbReference>
<dbReference type="PANTHER" id="PTHR43090:SF7">
    <property type="entry name" value="1-(5-PHOSPHORIBOSYL)-5-[(5-PHOSPHORIBOSYLAMINO)METHYLIDENEAMINO] IMIDAZOLE-4-CARBOXAMIDE ISOMERASE"/>
    <property type="match status" value="1"/>
</dbReference>
<dbReference type="Pfam" id="PF00977">
    <property type="entry name" value="His_biosynth"/>
    <property type="match status" value="1"/>
</dbReference>
<dbReference type="SUPFAM" id="SSF51366">
    <property type="entry name" value="Ribulose-phoshate binding barrel"/>
    <property type="match status" value="1"/>
</dbReference>
<feature type="chain" id="PRO_1000135130" description="1-(5-phosphoribosyl)-5-[(5-phosphoribosylamino)methylideneamino] imidazole-4-carboxamide isomerase">
    <location>
        <begin position="1"/>
        <end position="238"/>
    </location>
</feature>
<feature type="active site" description="Proton acceptor" evidence="1">
    <location>
        <position position="8"/>
    </location>
</feature>
<feature type="active site" description="Proton donor" evidence="1">
    <location>
        <position position="130"/>
    </location>
</feature>